<feature type="chain" id="PRO_0000093786" description="GMP reductase">
    <location>
        <begin position="1"/>
        <end position="479"/>
    </location>
</feature>
<feature type="domain" description="CBS 1" evidence="1">
    <location>
        <begin position="96"/>
        <end position="153"/>
    </location>
</feature>
<feature type="domain" description="CBS 2" evidence="1">
    <location>
        <begin position="154"/>
        <end position="212"/>
    </location>
</feature>
<feature type="active site" description="Thioimidate intermediate" evidence="1">
    <location>
        <position position="303"/>
    </location>
</feature>
<feature type="binding site" evidence="1">
    <location>
        <begin position="246"/>
        <end position="248"/>
    </location>
    <ligand>
        <name>NADP(+)</name>
        <dbReference type="ChEBI" id="CHEBI:58349"/>
    </ligand>
</feature>
<feature type="binding site" evidence="1">
    <location>
        <begin position="296"/>
        <end position="298"/>
    </location>
    <ligand>
        <name>NADP(+)</name>
        <dbReference type="ChEBI" id="CHEBI:58349"/>
    </ligand>
</feature>
<evidence type="ECO:0000255" key="1">
    <source>
        <dbReference type="HAMAP-Rule" id="MF_02250"/>
    </source>
</evidence>
<evidence type="ECO:0000305" key="2"/>
<evidence type="ECO:0000312" key="3">
    <source>
        <dbReference type="EMBL" id="SIU00478.1"/>
    </source>
</evidence>
<dbReference type="EC" id="1.7.1.7" evidence="1"/>
<dbReference type="EMBL" id="LT708304">
    <property type="protein sequence ID" value="SIU00478.1"/>
    <property type="status" value="ALT_INIT"/>
    <property type="molecule type" value="Genomic_DNA"/>
</dbReference>
<dbReference type="RefSeq" id="NP_855526.1">
    <property type="nucleotide sequence ID" value="NC_002945.3"/>
</dbReference>
<dbReference type="RefSeq" id="WP_003902189.1">
    <property type="nucleotide sequence ID" value="NC_002945.4"/>
</dbReference>
<dbReference type="SMR" id="P65173"/>
<dbReference type="KEGG" id="mbo:BQ2027_MB1874C"/>
<dbReference type="PATRIC" id="fig|233413.5.peg.2054"/>
<dbReference type="UniPathway" id="UPA00591"/>
<dbReference type="Proteomes" id="UP000001419">
    <property type="component" value="Chromosome"/>
</dbReference>
<dbReference type="GO" id="GO:0005829">
    <property type="term" value="C:cytosol"/>
    <property type="evidence" value="ECO:0007669"/>
    <property type="project" value="TreeGrafter"/>
</dbReference>
<dbReference type="GO" id="GO:0003920">
    <property type="term" value="F:GMP reductase activity"/>
    <property type="evidence" value="ECO:0007669"/>
    <property type="project" value="UniProtKB-UniRule"/>
</dbReference>
<dbReference type="GO" id="GO:0003938">
    <property type="term" value="F:IMP dehydrogenase activity"/>
    <property type="evidence" value="ECO:0007669"/>
    <property type="project" value="InterPro"/>
</dbReference>
<dbReference type="GO" id="GO:0032264">
    <property type="term" value="P:IMP salvage"/>
    <property type="evidence" value="ECO:0007669"/>
    <property type="project" value="UniProtKB-UniRule"/>
</dbReference>
<dbReference type="GO" id="GO:0006166">
    <property type="term" value="P:purine ribonucleoside salvage"/>
    <property type="evidence" value="ECO:0007669"/>
    <property type="project" value="UniProtKB-KW"/>
</dbReference>
<dbReference type="CDD" id="cd02205">
    <property type="entry name" value="CBS_pair_SF"/>
    <property type="match status" value="1"/>
</dbReference>
<dbReference type="CDD" id="cd00381">
    <property type="entry name" value="IMPDH"/>
    <property type="match status" value="1"/>
</dbReference>
<dbReference type="FunFam" id="3.20.20.70:FF:000108">
    <property type="entry name" value="IMP dehydrogenase family protein"/>
    <property type="match status" value="1"/>
</dbReference>
<dbReference type="Gene3D" id="3.20.20.70">
    <property type="entry name" value="Aldolase class I"/>
    <property type="match status" value="1"/>
</dbReference>
<dbReference type="HAMAP" id="MF_02250">
    <property type="entry name" value="GMPR_GuaB1"/>
    <property type="match status" value="1"/>
</dbReference>
<dbReference type="InterPro" id="IPR013785">
    <property type="entry name" value="Aldolase_TIM"/>
</dbReference>
<dbReference type="InterPro" id="IPR000644">
    <property type="entry name" value="CBS_dom"/>
</dbReference>
<dbReference type="InterPro" id="IPR046342">
    <property type="entry name" value="CBS_dom_sf"/>
</dbReference>
<dbReference type="InterPro" id="IPR050139">
    <property type="entry name" value="GMP_reductase"/>
</dbReference>
<dbReference type="InterPro" id="IPR005991">
    <property type="entry name" value="GUAB1"/>
</dbReference>
<dbReference type="InterPro" id="IPR005990">
    <property type="entry name" value="IMP_DH"/>
</dbReference>
<dbReference type="InterPro" id="IPR001093">
    <property type="entry name" value="IMP_DH_GMPRt"/>
</dbReference>
<dbReference type="NCBIfam" id="TIGR01303">
    <property type="entry name" value="IMP_DH_rel_1"/>
    <property type="match status" value="1"/>
</dbReference>
<dbReference type="NCBIfam" id="NF005869">
    <property type="entry name" value="PRK07807.1"/>
    <property type="match status" value="1"/>
</dbReference>
<dbReference type="PANTHER" id="PTHR43170">
    <property type="entry name" value="GMP REDUCTASE"/>
    <property type="match status" value="1"/>
</dbReference>
<dbReference type="PANTHER" id="PTHR43170:SF5">
    <property type="entry name" value="GMP REDUCTASE"/>
    <property type="match status" value="1"/>
</dbReference>
<dbReference type="Pfam" id="PF00571">
    <property type="entry name" value="CBS"/>
    <property type="match status" value="2"/>
</dbReference>
<dbReference type="Pfam" id="PF00478">
    <property type="entry name" value="IMPDH"/>
    <property type="match status" value="1"/>
</dbReference>
<dbReference type="PIRSF" id="PIRSF000130">
    <property type="entry name" value="IMPDH"/>
    <property type="match status" value="1"/>
</dbReference>
<dbReference type="SMART" id="SM01240">
    <property type="entry name" value="IMPDH"/>
    <property type="match status" value="1"/>
</dbReference>
<dbReference type="SUPFAM" id="SSF54631">
    <property type="entry name" value="CBS-domain pair"/>
    <property type="match status" value="1"/>
</dbReference>
<dbReference type="SUPFAM" id="SSF51412">
    <property type="entry name" value="Inosine monophosphate dehydrogenase (IMPDH)"/>
    <property type="match status" value="1"/>
</dbReference>
<dbReference type="PROSITE" id="PS51371">
    <property type="entry name" value="CBS"/>
    <property type="match status" value="2"/>
</dbReference>
<reference key="1">
    <citation type="journal article" date="2003" name="Proc. Natl. Acad. Sci. U.S.A.">
        <title>The complete genome sequence of Mycobacterium bovis.</title>
        <authorList>
            <person name="Garnier T."/>
            <person name="Eiglmeier K."/>
            <person name="Camus J.-C."/>
            <person name="Medina N."/>
            <person name="Mansoor H."/>
            <person name="Pryor M."/>
            <person name="Duthoy S."/>
            <person name="Grondin S."/>
            <person name="Lacroix C."/>
            <person name="Monsempe C."/>
            <person name="Simon S."/>
            <person name="Harris B."/>
            <person name="Atkin R."/>
            <person name="Doggett J."/>
            <person name="Mayes R."/>
            <person name="Keating L."/>
            <person name="Wheeler P.R."/>
            <person name="Parkhill J."/>
            <person name="Barrell B.G."/>
            <person name="Cole S.T."/>
            <person name="Gordon S.V."/>
            <person name="Hewinson R.G."/>
        </authorList>
    </citation>
    <scope>NUCLEOTIDE SEQUENCE [LARGE SCALE GENOMIC DNA]</scope>
    <source>
        <strain>ATCC BAA-935 / AF2122/97</strain>
    </source>
</reference>
<reference key="2">
    <citation type="journal article" date="2017" name="Genome Announc.">
        <title>Updated reference genome sequence and annotation of Mycobacterium bovis AF2122/97.</title>
        <authorList>
            <person name="Malone K.M."/>
            <person name="Farrell D."/>
            <person name="Stuber T.P."/>
            <person name="Schubert O.T."/>
            <person name="Aebersold R."/>
            <person name="Robbe-Austerman S."/>
            <person name="Gordon S.V."/>
        </authorList>
    </citation>
    <scope>NUCLEOTIDE SEQUENCE [LARGE SCALE GENOMIC DNA]</scope>
    <scope>GENOME REANNOTATION</scope>
    <source>
        <strain>ATCC BAA-935 / AF2122/97</strain>
    </source>
</reference>
<accession>P65173</accession>
<accession>A0A1R3XZH2</accession>
<accession>Q50591</accession>
<accession>X2BJ81</accession>
<gene>
    <name evidence="1 3" type="primary">guaB1</name>
    <name type="ordered locus">BQ2027_MB1874C</name>
</gene>
<organism>
    <name type="scientific">Mycobacterium bovis (strain ATCC BAA-935 / AF2122/97)</name>
    <dbReference type="NCBI Taxonomy" id="233413"/>
    <lineage>
        <taxon>Bacteria</taxon>
        <taxon>Bacillati</taxon>
        <taxon>Actinomycetota</taxon>
        <taxon>Actinomycetes</taxon>
        <taxon>Mycobacteriales</taxon>
        <taxon>Mycobacteriaceae</taxon>
        <taxon>Mycobacterium</taxon>
        <taxon>Mycobacterium tuberculosis complex</taxon>
    </lineage>
</organism>
<comment type="function">
    <text evidence="1">Involved in the purine-salvage pathway. Catalyzes the NADPH-dependent conversion of GMP to IMP.</text>
</comment>
<comment type="catalytic activity">
    <reaction evidence="1">
        <text>IMP + NH4(+) + NADP(+) = GMP + NADPH + 2 H(+)</text>
        <dbReference type="Rhea" id="RHEA:17185"/>
        <dbReference type="ChEBI" id="CHEBI:15378"/>
        <dbReference type="ChEBI" id="CHEBI:28938"/>
        <dbReference type="ChEBI" id="CHEBI:57783"/>
        <dbReference type="ChEBI" id="CHEBI:58053"/>
        <dbReference type="ChEBI" id="CHEBI:58115"/>
        <dbReference type="ChEBI" id="CHEBI:58349"/>
        <dbReference type="EC" id="1.7.1.7"/>
    </reaction>
    <physiologicalReaction direction="right-to-left" evidence="1">
        <dbReference type="Rhea" id="RHEA:17187"/>
    </physiologicalReaction>
</comment>
<comment type="cofactor">
    <cofactor evidence="1">
        <name>a monovalent cation</name>
        <dbReference type="ChEBI" id="CHEBI:60242"/>
    </cofactor>
</comment>
<comment type="pathway">
    <text evidence="1">Purine metabolism; IMP biosynthesis via salvage pathway.</text>
</comment>
<comment type="similarity">
    <text evidence="1">Belongs to the IMPDH/GMPR family. GuaB1 subfamily.</text>
</comment>
<comment type="sequence caution" evidence="2">
    <conflict type="erroneous initiation">
        <sequence resource="EMBL-CDS" id="SIU00478"/>
    </conflict>
    <text>Truncated N-terminus.</text>
</comment>
<keyword id="KW-0129">CBS domain</keyword>
<keyword id="KW-0521">NADP</keyword>
<keyword id="KW-0560">Oxidoreductase</keyword>
<keyword id="KW-0660">Purine salvage</keyword>
<keyword id="KW-1185">Reference proteome</keyword>
<keyword id="KW-0677">Repeat</keyword>
<name>GUAB1_MYCBO</name>
<proteinExistence type="inferred from homology"/>
<sequence>MMRFLDGHPPGYDLTYNDVFIVPNRSEVASRFDVDLSTADGSGTTIPVVVANMTAVAGRRMAETVARRGGIVILPQDLPIPAVKQTVAFVKSRDLVLDTPVTLAPDDSVSDAMALIHKRAHGVAVVILEGRPIGLVRESSCLGVDRFTRVRDIAVTDYVTAPAGTEPRKIFDLLEHAPVDVAVLTDADGTLAGVLSRTGAIRAGIYTPATDSAGRLRIGAAVGINGDVGAKARALAEAGVDVLVIDTAHGHQVKTLDAIKAVSALDLGLPLAAGNVVSAEGTRDLLKAGANVVKVGVGPGAMCTTRMMTGVGRPQFSAVLECASAARQLGGHIWADGGIRHPRDVALALAAGASNVMIGSWFAGTYESPGDLMRDRDDQPYKESYGMASKRAVVARTGADNPFDRARKALFEEGISTSRMGLDPDRGGVEDLIDHITSGVRSTCTYVGASNLAELHERAVVGVQSGAGFAEGHPLPAGW</sequence>
<protein>
    <recommendedName>
        <fullName evidence="1">GMP reductase</fullName>
        <ecNumber evidence="1">1.7.1.7</ecNumber>
    </recommendedName>
    <alternativeName>
        <fullName evidence="1">Guanosine 5'-monophosphate reductase</fullName>
        <shortName evidence="1">GMPR</shortName>
    </alternativeName>
</protein>